<protein>
    <recommendedName>
        <fullName evidence="7">Inactive metallocarboxypeptidase ecm14</fullName>
    </recommendedName>
</protein>
<gene>
    <name type="primary">ecm14</name>
    <name type="ORF">AFUB_024700</name>
</gene>
<sequence>MRLLLSVLLLLVASLGLVSAVPAGSSITPPPPIEPIQWLSSRSTDSRRPWIRVRDWVIESIWGISKDASHHRSVKASPRSRSPSRSLTRYGSDVVLRFHLRNAEEAEALAEATDVLFLDVWTSTSEFVDIRLAQEVIPSLLGLLPDSLRTAYTPLIDNLAEMIYATYPTRRPAGFEDQPGFIPSMRQSTQFGDLFFRDYQPLSVIVPWMRLMASMFSSHVQMINVGVSHEGREIPALRLGRTRGQTADPYPRKTIVVVGGSHAREWISTSTVIYVAYSLITRYGKSQQVTRLLEDFDWVFVPTLNPDGYVYTWESDRLWRKNRQPTSLHFCPGIDLDRAWEFQWDGERTRSNPCSENYAGTEPFEGTEAHQLAQWALNETQTNNAKIVGFLDLHSYSQQILYPFSFSCSSVPPTLESLEELGIGLAKVIRLTTHEIYDVTAACEGTITADDQARNSPPQRPIFPTGGSSGGSALDWFYHQLHTDYAYQIKLRDRGSYGFLLPSEYIVPTGKEIFNVVLTFGKFLIGDLAQNTDLDWDAELQRTEPDEAPASQGDGPAPATQQVLQADVDDEETEWVENARSEFRRR</sequence>
<feature type="signal peptide" evidence="4">
    <location>
        <begin position="1"/>
        <end position="20"/>
    </location>
</feature>
<feature type="propeptide" id="PRO_0000453235" evidence="3">
    <location>
        <begin position="21"/>
        <end position="170"/>
    </location>
</feature>
<feature type="chain" id="PRO_0000411176" description="Inactive metallocarboxypeptidase ecm14">
    <location>
        <begin position="171"/>
        <end position="586"/>
    </location>
</feature>
<feature type="domain" description="Peptidase M14" evidence="5">
    <location>
        <begin position="198"/>
        <end position="524"/>
    </location>
</feature>
<feature type="region of interest" description="Disordered" evidence="6">
    <location>
        <begin position="540"/>
        <end position="586"/>
    </location>
</feature>
<feature type="compositionally biased region" description="Basic and acidic residues" evidence="6">
    <location>
        <begin position="577"/>
        <end position="586"/>
    </location>
</feature>
<feature type="binding site" evidence="1">
    <location>
        <begin position="262"/>
        <end position="265"/>
    </location>
    <ligand>
        <name>substrate</name>
    </ligand>
</feature>
<feature type="binding site" evidence="5">
    <location>
        <position position="262"/>
    </location>
    <ligand>
        <name>Zn(2+)</name>
        <dbReference type="ChEBI" id="CHEBI:29105"/>
        <note>catalytic</note>
    </ligand>
</feature>
<feature type="binding site" evidence="5">
    <location>
        <position position="265"/>
    </location>
    <ligand>
        <name>Zn(2+)</name>
        <dbReference type="ChEBI" id="CHEBI:29105"/>
        <note>catalytic</note>
    </ligand>
</feature>
<feature type="binding site" evidence="1">
    <location>
        <position position="320"/>
    </location>
    <ligand>
        <name>substrate</name>
    </ligand>
</feature>
<feature type="binding site" evidence="1">
    <location>
        <begin position="337"/>
        <end position="338"/>
    </location>
    <ligand>
        <name>substrate</name>
    </ligand>
</feature>
<feature type="binding site" evidence="5">
    <location>
        <position position="394"/>
    </location>
    <ligand>
        <name>Zn(2+)</name>
        <dbReference type="ChEBI" id="CHEBI:29105"/>
        <note>catalytic</note>
    </ligand>
</feature>
<feature type="binding site" evidence="1">
    <location>
        <begin position="395"/>
        <end position="396"/>
    </location>
    <ligand>
        <name>substrate</name>
    </ligand>
</feature>
<feature type="glycosylation site" description="N-linked (GlcNAc...) asparagine" evidence="4">
    <location>
        <position position="378"/>
    </location>
</feature>
<feature type="disulfide bond" evidence="2">
    <location>
        <begin position="331"/>
        <end position="354"/>
    </location>
</feature>
<name>ECM14_ASPFC</name>
<comment type="function">
    <text evidence="3">Inactive carboxypeptidase that may play a role in cell wall organization and biogenesis.</text>
</comment>
<comment type="cofactor">
    <cofactor evidence="1">
        <name>Zn(2+)</name>
        <dbReference type="ChEBI" id="CHEBI:29105"/>
    </cofactor>
    <text evidence="1">Binds 1 zinc ion per subunit.</text>
</comment>
<comment type="subcellular location">
    <subcellularLocation>
        <location evidence="3">Vacuole</location>
    </subcellularLocation>
    <subcellularLocation>
        <location evidence="3">Secreted</location>
    </subcellularLocation>
</comment>
<comment type="similarity">
    <text evidence="7">Belongs to the peptidase M14 family.</text>
</comment>
<comment type="caution">
    <text evidence="3">Lacks the conserved Glu residue in position 490 essential for carbopeptidase activity. The mature form lacks catalytic activity towards synthetic peptide substrates.</text>
</comment>
<proteinExistence type="inferred from homology"/>
<evidence type="ECO:0000250" key="1">
    <source>
        <dbReference type="UniProtKB" id="P00730"/>
    </source>
</evidence>
<evidence type="ECO:0000250" key="2">
    <source>
        <dbReference type="UniProtKB" id="P15085"/>
    </source>
</evidence>
<evidence type="ECO:0000250" key="3">
    <source>
        <dbReference type="UniProtKB" id="P38836"/>
    </source>
</evidence>
<evidence type="ECO:0000255" key="4"/>
<evidence type="ECO:0000255" key="5">
    <source>
        <dbReference type="PROSITE-ProRule" id="PRU01379"/>
    </source>
</evidence>
<evidence type="ECO:0000256" key="6">
    <source>
        <dbReference type="SAM" id="MobiDB-lite"/>
    </source>
</evidence>
<evidence type="ECO:0000305" key="7"/>
<accession>B0XRS8</accession>
<reference key="1">
    <citation type="journal article" date="2008" name="PLoS Genet.">
        <title>Genomic islands in the pathogenic filamentous fungus Aspergillus fumigatus.</title>
        <authorList>
            <person name="Fedorova N.D."/>
            <person name="Khaldi N."/>
            <person name="Joardar V.S."/>
            <person name="Maiti R."/>
            <person name="Amedeo P."/>
            <person name="Anderson M.J."/>
            <person name="Crabtree J."/>
            <person name="Silva J.C."/>
            <person name="Badger J.H."/>
            <person name="Albarraq A."/>
            <person name="Angiuoli S."/>
            <person name="Bussey H."/>
            <person name="Bowyer P."/>
            <person name="Cotty P.J."/>
            <person name="Dyer P.S."/>
            <person name="Egan A."/>
            <person name="Galens K."/>
            <person name="Fraser-Liggett C.M."/>
            <person name="Haas B.J."/>
            <person name="Inman J.M."/>
            <person name="Kent R."/>
            <person name="Lemieux S."/>
            <person name="Malavazi I."/>
            <person name="Orvis J."/>
            <person name="Roemer T."/>
            <person name="Ronning C.M."/>
            <person name="Sundaram J.P."/>
            <person name="Sutton G."/>
            <person name="Turner G."/>
            <person name="Venter J.C."/>
            <person name="White O.R."/>
            <person name="Whitty B.R."/>
            <person name="Youngman P."/>
            <person name="Wolfe K.H."/>
            <person name="Goldman G.H."/>
            <person name="Wortman J.R."/>
            <person name="Jiang B."/>
            <person name="Denning D.W."/>
            <person name="Nierman W.C."/>
        </authorList>
    </citation>
    <scope>NUCLEOTIDE SEQUENCE [LARGE SCALE GENOMIC DNA]</scope>
    <source>
        <strain>CBS 144.89 / FGSC A1163 / CEA10</strain>
    </source>
</reference>
<keyword id="KW-0961">Cell wall biogenesis/degradation</keyword>
<keyword id="KW-1015">Disulfide bond</keyword>
<keyword id="KW-0325">Glycoprotein</keyword>
<keyword id="KW-0479">Metal-binding</keyword>
<keyword id="KW-0964">Secreted</keyword>
<keyword id="KW-0732">Signal</keyword>
<keyword id="KW-0926">Vacuole</keyword>
<keyword id="KW-0862">Zinc</keyword>
<organism>
    <name type="scientific">Aspergillus fumigatus (strain CBS 144.89 / FGSC A1163 / CEA10)</name>
    <name type="common">Neosartorya fumigata</name>
    <dbReference type="NCBI Taxonomy" id="451804"/>
    <lineage>
        <taxon>Eukaryota</taxon>
        <taxon>Fungi</taxon>
        <taxon>Dikarya</taxon>
        <taxon>Ascomycota</taxon>
        <taxon>Pezizomycotina</taxon>
        <taxon>Eurotiomycetes</taxon>
        <taxon>Eurotiomycetidae</taxon>
        <taxon>Eurotiales</taxon>
        <taxon>Aspergillaceae</taxon>
        <taxon>Aspergillus</taxon>
        <taxon>Aspergillus subgen. Fumigati</taxon>
    </lineage>
</organism>
<dbReference type="EMBL" id="DS499595">
    <property type="protein sequence ID" value="EDP54414.1"/>
    <property type="molecule type" value="Genomic_DNA"/>
</dbReference>
<dbReference type="SMR" id="B0XRS8"/>
<dbReference type="GlyCosmos" id="B0XRS8">
    <property type="glycosylation" value="1 site, No reported glycans"/>
</dbReference>
<dbReference type="EnsemblFungi" id="EDP54414">
    <property type="protein sequence ID" value="EDP54414"/>
    <property type="gene ID" value="AFUB_024700"/>
</dbReference>
<dbReference type="VEuPathDB" id="FungiDB:AFUB_024700"/>
<dbReference type="HOGENOM" id="CLU_019326_1_0_1"/>
<dbReference type="OrthoDB" id="86727at5052"/>
<dbReference type="PhylomeDB" id="B0XRS8"/>
<dbReference type="Proteomes" id="UP000001699">
    <property type="component" value="Unassembled WGS sequence"/>
</dbReference>
<dbReference type="GO" id="GO:0005576">
    <property type="term" value="C:extracellular region"/>
    <property type="evidence" value="ECO:0007669"/>
    <property type="project" value="UniProtKB-SubCell"/>
</dbReference>
<dbReference type="GO" id="GO:0005773">
    <property type="term" value="C:vacuole"/>
    <property type="evidence" value="ECO:0007669"/>
    <property type="project" value="UniProtKB-SubCell"/>
</dbReference>
<dbReference type="GO" id="GO:0008270">
    <property type="term" value="F:zinc ion binding"/>
    <property type="evidence" value="ECO:0007669"/>
    <property type="project" value="InterPro"/>
</dbReference>
<dbReference type="GO" id="GO:0071555">
    <property type="term" value="P:cell wall organization"/>
    <property type="evidence" value="ECO:0007669"/>
    <property type="project" value="UniProtKB-KW"/>
</dbReference>
<dbReference type="GO" id="GO:0006508">
    <property type="term" value="P:proteolysis"/>
    <property type="evidence" value="ECO:0007669"/>
    <property type="project" value="InterPro"/>
</dbReference>
<dbReference type="CDD" id="cd03860">
    <property type="entry name" value="M14_CP_A-B_like"/>
    <property type="match status" value="1"/>
</dbReference>
<dbReference type="FunFam" id="3.40.630.10:FF:000060">
    <property type="entry name" value="Putative metallocarboxypeptidase ecm14"/>
    <property type="match status" value="1"/>
</dbReference>
<dbReference type="Gene3D" id="3.30.70.340">
    <property type="entry name" value="Metallocarboxypeptidase-like"/>
    <property type="match status" value="1"/>
</dbReference>
<dbReference type="Gene3D" id="3.40.630.10">
    <property type="entry name" value="Zn peptidases"/>
    <property type="match status" value="1"/>
</dbReference>
<dbReference type="InterPro" id="IPR036990">
    <property type="entry name" value="M14A-like_propep"/>
</dbReference>
<dbReference type="InterPro" id="IPR000834">
    <property type="entry name" value="Peptidase_M14"/>
</dbReference>
<dbReference type="PANTHER" id="PTHR11705:SF147">
    <property type="entry name" value="INACTIVE METALLOCARBOXYPEPTIDASE ECM14"/>
    <property type="match status" value="1"/>
</dbReference>
<dbReference type="PANTHER" id="PTHR11705">
    <property type="entry name" value="PROTEASE FAMILY M14 CARBOXYPEPTIDASE A,B"/>
    <property type="match status" value="1"/>
</dbReference>
<dbReference type="Pfam" id="PF00246">
    <property type="entry name" value="Peptidase_M14"/>
    <property type="match status" value="1"/>
</dbReference>
<dbReference type="PRINTS" id="PR00765">
    <property type="entry name" value="CRBOXYPTASEA"/>
</dbReference>
<dbReference type="SMART" id="SM00631">
    <property type="entry name" value="Zn_pept"/>
    <property type="match status" value="1"/>
</dbReference>
<dbReference type="SUPFAM" id="SSF54897">
    <property type="entry name" value="Protease propeptides/inhibitors"/>
    <property type="match status" value="1"/>
</dbReference>
<dbReference type="SUPFAM" id="SSF53187">
    <property type="entry name" value="Zn-dependent exopeptidases"/>
    <property type="match status" value="1"/>
</dbReference>
<dbReference type="PROSITE" id="PS00132">
    <property type="entry name" value="CARBOXYPEPT_ZN_1"/>
    <property type="match status" value="1"/>
</dbReference>
<dbReference type="PROSITE" id="PS52035">
    <property type="entry name" value="PEPTIDASE_M14"/>
    <property type="match status" value="1"/>
</dbReference>